<name>UB2D3_MOUSE</name>
<sequence length="147" mass="16687">MALKRINKELSDLARDPPAQCSAGPVGDDMFHWQATIMGPNDSPYQGGVFFLTIHFPTDYPFKPPKVAFTTRIYHPNINSNGSICLDILRSQWSPALTISKVLLSICSLLCDPNPDDPLVPEIARIYKTDRDKYNRISREWTQKYAM</sequence>
<organism>
    <name type="scientific">Mus musculus</name>
    <name type="common">Mouse</name>
    <dbReference type="NCBI Taxonomy" id="10090"/>
    <lineage>
        <taxon>Eukaryota</taxon>
        <taxon>Metazoa</taxon>
        <taxon>Chordata</taxon>
        <taxon>Craniata</taxon>
        <taxon>Vertebrata</taxon>
        <taxon>Euteleostomi</taxon>
        <taxon>Mammalia</taxon>
        <taxon>Eutheria</taxon>
        <taxon>Euarchontoglires</taxon>
        <taxon>Glires</taxon>
        <taxon>Rodentia</taxon>
        <taxon>Myomorpha</taxon>
        <taxon>Muroidea</taxon>
        <taxon>Muridae</taxon>
        <taxon>Murinae</taxon>
        <taxon>Mus</taxon>
        <taxon>Mus</taxon>
    </lineage>
</organism>
<dbReference type="EC" id="2.3.2.23"/>
<dbReference type="EC" id="2.3.2.24"/>
<dbReference type="EMBL" id="AK004001">
    <property type="protein sequence ID" value="BAB23116.1"/>
    <property type="molecule type" value="mRNA"/>
</dbReference>
<dbReference type="EMBL" id="AK032885">
    <property type="protein sequence ID" value="BAC28070.1"/>
    <property type="molecule type" value="mRNA"/>
</dbReference>
<dbReference type="EMBL" id="AK049906">
    <property type="protein sequence ID" value="BAC33981.1"/>
    <property type="molecule type" value="mRNA"/>
</dbReference>
<dbReference type="EMBL" id="AK077666">
    <property type="protein sequence ID" value="BAC36940.1"/>
    <property type="molecule type" value="mRNA"/>
</dbReference>
<dbReference type="EMBL" id="AK088448">
    <property type="protein sequence ID" value="BAC40357.1"/>
    <property type="molecule type" value="mRNA"/>
</dbReference>
<dbReference type="EMBL" id="BC057941">
    <property type="protein sequence ID" value="AAH57941.1"/>
    <property type="molecule type" value="mRNA"/>
</dbReference>
<dbReference type="CCDS" id="CCDS38644.1"/>
<dbReference type="RefSeq" id="NP_001343523.1">
    <property type="nucleotide sequence ID" value="NM_001356594.1"/>
</dbReference>
<dbReference type="RefSeq" id="NP_001343524.1">
    <property type="nucleotide sequence ID" value="NM_001356595.1"/>
</dbReference>
<dbReference type="RefSeq" id="NP_001343525.1">
    <property type="nucleotide sequence ID" value="NM_001356596.1"/>
</dbReference>
<dbReference type="RefSeq" id="NP_001343526.1">
    <property type="nucleotide sequence ID" value="NM_001356597.1"/>
</dbReference>
<dbReference type="RefSeq" id="NP_079632.1">
    <property type="nucleotide sequence ID" value="NM_025356.5"/>
</dbReference>
<dbReference type="RefSeq" id="XP_006501936.1">
    <property type="nucleotide sequence ID" value="XM_006501873.2"/>
</dbReference>
<dbReference type="RefSeq" id="XP_006501937.1">
    <property type="nucleotide sequence ID" value="XM_006501874.2"/>
</dbReference>
<dbReference type="RefSeq" id="XP_006501938.1">
    <property type="nucleotide sequence ID" value="XM_006501875.2"/>
</dbReference>
<dbReference type="BMRB" id="P61079"/>
<dbReference type="SMR" id="P61079"/>
<dbReference type="BioGRID" id="211216">
    <property type="interactions" value="16"/>
</dbReference>
<dbReference type="FunCoup" id="P61079">
    <property type="interactions" value="3369"/>
</dbReference>
<dbReference type="IntAct" id="P61079">
    <property type="interactions" value="1"/>
</dbReference>
<dbReference type="STRING" id="10090.ENSMUSP00000143608"/>
<dbReference type="ChEMBL" id="CHEMBL4105725"/>
<dbReference type="GlyGen" id="P61079">
    <property type="glycosylation" value="1 site, 1 O-linked glycan (1 site)"/>
</dbReference>
<dbReference type="iPTMnet" id="P61079"/>
<dbReference type="PhosphoSitePlus" id="P61079"/>
<dbReference type="SwissPalm" id="P61079"/>
<dbReference type="jPOST" id="P61079"/>
<dbReference type="PaxDb" id="10090-ENSMUSP00000130096"/>
<dbReference type="PeptideAtlas" id="P61079"/>
<dbReference type="ProteomicsDB" id="298347"/>
<dbReference type="Pumba" id="P61079"/>
<dbReference type="TopDownProteomics" id="P61079"/>
<dbReference type="DNASU" id="66105"/>
<dbReference type="Ensembl" id="ENSMUST00000106291.10">
    <property type="protein sequence ID" value="ENSMUSP00000101898.4"/>
    <property type="gene ID" value="ENSMUSG00000078578.10"/>
</dbReference>
<dbReference type="Ensembl" id="ENSMUST00000166033.6">
    <property type="protein sequence ID" value="ENSMUSP00000130096.2"/>
    <property type="gene ID" value="ENSMUSG00000078578.10"/>
</dbReference>
<dbReference type="Ensembl" id="ENSMUST00000196446.5">
    <property type="protein sequence ID" value="ENSMUSP00000142974.2"/>
    <property type="gene ID" value="ENSMUSG00000078578.10"/>
</dbReference>
<dbReference type="Ensembl" id="ENSMUST00000197539.5">
    <property type="protein sequence ID" value="ENSMUSP00000143065.2"/>
    <property type="gene ID" value="ENSMUSG00000078578.10"/>
</dbReference>
<dbReference type="Ensembl" id="ENSMUST00000197859.5">
    <property type="protein sequence ID" value="ENSMUSP00000143608.2"/>
    <property type="gene ID" value="ENSMUSG00000078578.10"/>
</dbReference>
<dbReference type="Ensembl" id="ENSMUST00000199613.5">
    <property type="protein sequence ID" value="ENSMUSP00000143301.2"/>
    <property type="gene ID" value="ENSMUSG00000078578.10"/>
</dbReference>
<dbReference type="GeneID" id="66105"/>
<dbReference type="KEGG" id="mmu:66105"/>
<dbReference type="UCSC" id="uc008rln.1">
    <property type="organism name" value="mouse"/>
</dbReference>
<dbReference type="AGR" id="MGI:1913355"/>
<dbReference type="CTD" id="7323"/>
<dbReference type="MGI" id="MGI:1913355">
    <property type="gene designation" value="Ube2d3"/>
</dbReference>
<dbReference type="VEuPathDB" id="HostDB:ENSMUSG00000078578"/>
<dbReference type="eggNOG" id="KOG0417">
    <property type="taxonomic scope" value="Eukaryota"/>
</dbReference>
<dbReference type="GeneTree" id="ENSGT00940000153169"/>
<dbReference type="InParanoid" id="P61079"/>
<dbReference type="PhylomeDB" id="P61079"/>
<dbReference type="TreeFam" id="TF101108"/>
<dbReference type="Reactome" id="R-MMU-1234176">
    <property type="pathway name" value="Oxygen-dependent proline hydroxylation of Hypoxia-inducible Factor Alpha"/>
</dbReference>
<dbReference type="Reactome" id="R-MMU-201451">
    <property type="pathway name" value="Signaling by BMP"/>
</dbReference>
<dbReference type="Reactome" id="R-MMU-2173795">
    <property type="pathway name" value="Downregulation of SMAD2/3:SMAD4 transcriptional activity"/>
</dbReference>
<dbReference type="Reactome" id="R-MMU-5205685">
    <property type="pathway name" value="PINK1-PRKN Mediated Mitophagy"/>
</dbReference>
<dbReference type="Reactome" id="R-MMU-5357905">
    <property type="pathway name" value="Regulation of TNFR1 signaling"/>
</dbReference>
<dbReference type="Reactome" id="R-MMU-8866654">
    <property type="pathway name" value="E3 ubiquitin ligases ubiquitinate target proteins"/>
</dbReference>
<dbReference type="Reactome" id="R-MMU-8951664">
    <property type="pathway name" value="Neddylation"/>
</dbReference>
<dbReference type="Reactome" id="R-MMU-9033241">
    <property type="pathway name" value="Peroxisomal protein import"/>
</dbReference>
<dbReference type="Reactome" id="R-MMU-937041">
    <property type="pathway name" value="IKK complex recruitment mediated by RIP1"/>
</dbReference>
<dbReference type="Reactome" id="R-MMU-9705462">
    <property type="pathway name" value="Inactivation of CSF3 (G-CSF) signaling"/>
</dbReference>
<dbReference type="Reactome" id="R-MMU-983168">
    <property type="pathway name" value="Antigen processing: Ubiquitination &amp; Proteasome degradation"/>
</dbReference>
<dbReference type="UniPathway" id="UPA00143"/>
<dbReference type="BioGRID-ORCS" id="66105">
    <property type="hits" value="16 hits in 83 CRISPR screens"/>
</dbReference>
<dbReference type="ChiTaRS" id="Ube2d3">
    <property type="organism name" value="mouse"/>
</dbReference>
<dbReference type="PRO" id="PR:P61079"/>
<dbReference type="Proteomes" id="UP000000589">
    <property type="component" value="Chromosome 3"/>
</dbReference>
<dbReference type="RNAct" id="P61079">
    <property type="molecule type" value="protein"/>
</dbReference>
<dbReference type="Bgee" id="ENSMUSG00000078578">
    <property type="expression patterns" value="Expressed in undifferentiated genital tubercle and 260 other cell types or tissues"/>
</dbReference>
<dbReference type="ExpressionAtlas" id="P61079">
    <property type="expression patterns" value="baseline and differential"/>
</dbReference>
<dbReference type="GO" id="GO:0010008">
    <property type="term" value="C:endosome membrane"/>
    <property type="evidence" value="ECO:0007669"/>
    <property type="project" value="UniProtKB-SubCell"/>
</dbReference>
<dbReference type="GO" id="GO:0005886">
    <property type="term" value="C:plasma membrane"/>
    <property type="evidence" value="ECO:0007669"/>
    <property type="project" value="UniProtKB-SubCell"/>
</dbReference>
<dbReference type="GO" id="GO:0005524">
    <property type="term" value="F:ATP binding"/>
    <property type="evidence" value="ECO:0007669"/>
    <property type="project" value="UniProtKB-KW"/>
</dbReference>
<dbReference type="GO" id="GO:0061631">
    <property type="term" value="F:ubiquitin conjugating enzyme activity"/>
    <property type="evidence" value="ECO:0000250"/>
    <property type="project" value="UniProtKB"/>
</dbReference>
<dbReference type="GO" id="GO:0004842">
    <property type="term" value="F:ubiquitin-protein transferase activity"/>
    <property type="evidence" value="ECO:0000250"/>
    <property type="project" value="UniProtKB"/>
</dbReference>
<dbReference type="GO" id="GO:0006915">
    <property type="term" value="P:apoptotic process"/>
    <property type="evidence" value="ECO:0007669"/>
    <property type="project" value="UniProtKB-KW"/>
</dbReference>
<dbReference type="GO" id="GO:0006281">
    <property type="term" value="P:DNA repair"/>
    <property type="evidence" value="ECO:0007669"/>
    <property type="project" value="UniProtKB-KW"/>
</dbReference>
<dbReference type="GO" id="GO:0043161">
    <property type="term" value="P:proteasome-mediated ubiquitin-dependent protein catabolic process"/>
    <property type="evidence" value="ECO:0000314"/>
    <property type="project" value="MGI"/>
</dbReference>
<dbReference type="GO" id="GO:0070979">
    <property type="term" value="P:protein K11-linked ubiquitination"/>
    <property type="evidence" value="ECO:0000250"/>
    <property type="project" value="UniProtKB"/>
</dbReference>
<dbReference type="GO" id="GO:0070936">
    <property type="term" value="P:protein K48-linked ubiquitination"/>
    <property type="evidence" value="ECO:0000250"/>
    <property type="project" value="UniProtKB"/>
</dbReference>
<dbReference type="GO" id="GO:0085020">
    <property type="term" value="P:protein K6-linked ubiquitination"/>
    <property type="evidence" value="ECO:0000250"/>
    <property type="project" value="UniProtKB"/>
</dbReference>
<dbReference type="GO" id="GO:0000209">
    <property type="term" value="P:protein polyubiquitination"/>
    <property type="evidence" value="ECO:0000250"/>
    <property type="project" value="UniProtKB"/>
</dbReference>
<dbReference type="CDD" id="cd23792">
    <property type="entry name" value="UBCc_UBE2D"/>
    <property type="match status" value="1"/>
</dbReference>
<dbReference type="FunFam" id="3.10.110.10:FF:000101">
    <property type="entry name" value="Ubiquitin-conjugating enzyme E2 D2"/>
    <property type="match status" value="1"/>
</dbReference>
<dbReference type="Gene3D" id="3.10.110.10">
    <property type="entry name" value="Ubiquitin Conjugating Enzyme"/>
    <property type="match status" value="1"/>
</dbReference>
<dbReference type="InterPro" id="IPR000608">
    <property type="entry name" value="UBQ-conjugat_E2_core"/>
</dbReference>
<dbReference type="InterPro" id="IPR023313">
    <property type="entry name" value="UBQ-conjugating_AS"/>
</dbReference>
<dbReference type="InterPro" id="IPR016135">
    <property type="entry name" value="UBQ-conjugating_enzyme/RWD"/>
</dbReference>
<dbReference type="PANTHER" id="PTHR24068">
    <property type="entry name" value="UBIQUITIN-CONJUGATING ENZYME E2"/>
    <property type="match status" value="1"/>
</dbReference>
<dbReference type="Pfam" id="PF00179">
    <property type="entry name" value="UQ_con"/>
    <property type="match status" value="1"/>
</dbReference>
<dbReference type="SMART" id="SM00212">
    <property type="entry name" value="UBCc"/>
    <property type="match status" value="1"/>
</dbReference>
<dbReference type="SUPFAM" id="SSF54495">
    <property type="entry name" value="UBC-like"/>
    <property type="match status" value="1"/>
</dbReference>
<dbReference type="PROSITE" id="PS00183">
    <property type="entry name" value="UBC_1"/>
    <property type="match status" value="1"/>
</dbReference>
<dbReference type="PROSITE" id="PS50127">
    <property type="entry name" value="UBC_2"/>
    <property type="match status" value="1"/>
</dbReference>
<reference key="1">
    <citation type="journal article" date="2005" name="Science">
        <title>The transcriptional landscape of the mammalian genome.</title>
        <authorList>
            <person name="Carninci P."/>
            <person name="Kasukawa T."/>
            <person name="Katayama S."/>
            <person name="Gough J."/>
            <person name="Frith M.C."/>
            <person name="Maeda N."/>
            <person name="Oyama R."/>
            <person name="Ravasi T."/>
            <person name="Lenhard B."/>
            <person name="Wells C."/>
            <person name="Kodzius R."/>
            <person name="Shimokawa K."/>
            <person name="Bajic V.B."/>
            <person name="Brenner S.E."/>
            <person name="Batalov S."/>
            <person name="Forrest A.R."/>
            <person name="Zavolan M."/>
            <person name="Davis M.J."/>
            <person name="Wilming L.G."/>
            <person name="Aidinis V."/>
            <person name="Allen J.E."/>
            <person name="Ambesi-Impiombato A."/>
            <person name="Apweiler R."/>
            <person name="Aturaliya R.N."/>
            <person name="Bailey T.L."/>
            <person name="Bansal M."/>
            <person name="Baxter L."/>
            <person name="Beisel K.W."/>
            <person name="Bersano T."/>
            <person name="Bono H."/>
            <person name="Chalk A.M."/>
            <person name="Chiu K.P."/>
            <person name="Choudhary V."/>
            <person name="Christoffels A."/>
            <person name="Clutterbuck D.R."/>
            <person name="Crowe M.L."/>
            <person name="Dalla E."/>
            <person name="Dalrymple B.P."/>
            <person name="de Bono B."/>
            <person name="Della Gatta G."/>
            <person name="di Bernardo D."/>
            <person name="Down T."/>
            <person name="Engstrom P."/>
            <person name="Fagiolini M."/>
            <person name="Faulkner G."/>
            <person name="Fletcher C.F."/>
            <person name="Fukushima T."/>
            <person name="Furuno M."/>
            <person name="Futaki S."/>
            <person name="Gariboldi M."/>
            <person name="Georgii-Hemming P."/>
            <person name="Gingeras T.R."/>
            <person name="Gojobori T."/>
            <person name="Green R.E."/>
            <person name="Gustincich S."/>
            <person name="Harbers M."/>
            <person name="Hayashi Y."/>
            <person name="Hensch T.K."/>
            <person name="Hirokawa N."/>
            <person name="Hill D."/>
            <person name="Huminiecki L."/>
            <person name="Iacono M."/>
            <person name="Ikeo K."/>
            <person name="Iwama A."/>
            <person name="Ishikawa T."/>
            <person name="Jakt M."/>
            <person name="Kanapin A."/>
            <person name="Katoh M."/>
            <person name="Kawasawa Y."/>
            <person name="Kelso J."/>
            <person name="Kitamura H."/>
            <person name="Kitano H."/>
            <person name="Kollias G."/>
            <person name="Krishnan S.P."/>
            <person name="Kruger A."/>
            <person name="Kummerfeld S.K."/>
            <person name="Kurochkin I.V."/>
            <person name="Lareau L.F."/>
            <person name="Lazarevic D."/>
            <person name="Lipovich L."/>
            <person name="Liu J."/>
            <person name="Liuni S."/>
            <person name="McWilliam S."/>
            <person name="Madan Babu M."/>
            <person name="Madera M."/>
            <person name="Marchionni L."/>
            <person name="Matsuda H."/>
            <person name="Matsuzawa S."/>
            <person name="Miki H."/>
            <person name="Mignone F."/>
            <person name="Miyake S."/>
            <person name="Morris K."/>
            <person name="Mottagui-Tabar S."/>
            <person name="Mulder N."/>
            <person name="Nakano N."/>
            <person name="Nakauchi H."/>
            <person name="Ng P."/>
            <person name="Nilsson R."/>
            <person name="Nishiguchi S."/>
            <person name="Nishikawa S."/>
            <person name="Nori F."/>
            <person name="Ohara O."/>
            <person name="Okazaki Y."/>
            <person name="Orlando V."/>
            <person name="Pang K.C."/>
            <person name="Pavan W.J."/>
            <person name="Pavesi G."/>
            <person name="Pesole G."/>
            <person name="Petrovsky N."/>
            <person name="Piazza S."/>
            <person name="Reed J."/>
            <person name="Reid J.F."/>
            <person name="Ring B.Z."/>
            <person name="Ringwald M."/>
            <person name="Rost B."/>
            <person name="Ruan Y."/>
            <person name="Salzberg S.L."/>
            <person name="Sandelin A."/>
            <person name="Schneider C."/>
            <person name="Schoenbach C."/>
            <person name="Sekiguchi K."/>
            <person name="Semple C.A."/>
            <person name="Seno S."/>
            <person name="Sessa L."/>
            <person name="Sheng Y."/>
            <person name="Shibata Y."/>
            <person name="Shimada H."/>
            <person name="Shimada K."/>
            <person name="Silva D."/>
            <person name="Sinclair B."/>
            <person name="Sperling S."/>
            <person name="Stupka E."/>
            <person name="Sugiura K."/>
            <person name="Sultana R."/>
            <person name="Takenaka Y."/>
            <person name="Taki K."/>
            <person name="Tammoja K."/>
            <person name="Tan S.L."/>
            <person name="Tang S."/>
            <person name="Taylor M.S."/>
            <person name="Tegner J."/>
            <person name="Teichmann S.A."/>
            <person name="Ueda H.R."/>
            <person name="van Nimwegen E."/>
            <person name="Verardo R."/>
            <person name="Wei C.L."/>
            <person name="Yagi K."/>
            <person name="Yamanishi H."/>
            <person name="Zabarovsky E."/>
            <person name="Zhu S."/>
            <person name="Zimmer A."/>
            <person name="Hide W."/>
            <person name="Bult C."/>
            <person name="Grimmond S.M."/>
            <person name="Teasdale R.D."/>
            <person name="Liu E.T."/>
            <person name="Brusic V."/>
            <person name="Quackenbush J."/>
            <person name="Wahlestedt C."/>
            <person name="Mattick J.S."/>
            <person name="Hume D.A."/>
            <person name="Kai C."/>
            <person name="Sasaki D."/>
            <person name="Tomaru Y."/>
            <person name="Fukuda S."/>
            <person name="Kanamori-Katayama M."/>
            <person name="Suzuki M."/>
            <person name="Aoki J."/>
            <person name="Arakawa T."/>
            <person name="Iida J."/>
            <person name="Imamura K."/>
            <person name="Itoh M."/>
            <person name="Kato T."/>
            <person name="Kawaji H."/>
            <person name="Kawagashira N."/>
            <person name="Kawashima T."/>
            <person name="Kojima M."/>
            <person name="Kondo S."/>
            <person name="Konno H."/>
            <person name="Nakano K."/>
            <person name="Ninomiya N."/>
            <person name="Nishio T."/>
            <person name="Okada M."/>
            <person name="Plessy C."/>
            <person name="Shibata K."/>
            <person name="Shiraki T."/>
            <person name="Suzuki S."/>
            <person name="Tagami M."/>
            <person name="Waki K."/>
            <person name="Watahiki A."/>
            <person name="Okamura-Oho Y."/>
            <person name="Suzuki H."/>
            <person name="Kawai J."/>
            <person name="Hayashizaki Y."/>
        </authorList>
    </citation>
    <scope>NUCLEOTIDE SEQUENCE [LARGE SCALE MRNA]</scope>
    <source>
        <strain>C57BL/6J</strain>
        <strain>NOD</strain>
        <tissue>Hippocampus</tissue>
        <tissue>Thymus</tissue>
    </source>
</reference>
<reference key="2">
    <citation type="journal article" date="2004" name="Genome Res.">
        <title>The status, quality, and expansion of the NIH full-length cDNA project: the Mammalian Gene Collection (MGC).</title>
        <authorList>
            <consortium name="The MGC Project Team"/>
        </authorList>
    </citation>
    <scope>NUCLEOTIDE SEQUENCE [LARGE SCALE MRNA]</scope>
    <source>
        <strain>FVB/N</strain>
        <tissue>Mammary tumor</tissue>
    </source>
</reference>
<reference key="3">
    <citation type="journal article" date="2008" name="Biochem. Biophys. Res. Commun.">
        <title>Physical and functional interactions between ZIP kinase and UbcH5.</title>
        <authorList>
            <person name="Ohbayashi N."/>
            <person name="Okada K."/>
            <person name="Kawakami S."/>
            <person name="Togi S."/>
            <person name="Sato N."/>
            <person name="Ikeda O."/>
            <person name="Kamitani S."/>
            <person name="Muromoto R."/>
            <person name="Sekine Y."/>
            <person name="Kawai T."/>
            <person name="Akira S."/>
            <person name="Matsuda T."/>
        </authorList>
    </citation>
    <scope>INTERACTION WITH DAPK3</scope>
</reference>
<reference key="4">
    <citation type="journal article" date="2013" name="Mol. Cell">
        <title>The Aurora B kinase and the Polycomb protein Ring1B combine to regulate active promoters in quiescent lymphocytes.</title>
        <authorList>
            <person name="Frangini A."/>
            <person name="Sjoberg M."/>
            <person name="Roman-Trufero M."/>
            <person name="Dharmalingam G."/>
            <person name="Haberle V."/>
            <person name="Bartke T."/>
            <person name="Lenhard B."/>
            <person name="Malumbres M."/>
            <person name="Vidal M."/>
            <person name="Dillon N."/>
        </authorList>
    </citation>
    <scope>PHOSPHORYLATION</scope>
</reference>
<proteinExistence type="evidence at protein level"/>
<comment type="function">
    <text evidence="1">Accepts ubiquitin from the E1 complex and catalyzes its covalent attachment to other proteins. In vitro catalyzes 'Lys-11'-, as well as 'Lys-48'-linked polyubiquitination. Cooperates with the E2 CDC34 and the SCF(FBXW11) E3 ligase complex for the polyubiquitination of NFKBIA leading to its subsequent proteasomal degradation. Acts as an initiator E2, priming the phosphorylated NFKBIA target at positions 'Lys-21' and/or 'Lys-22' with a monoubiquitin. Ubiquitin chain elongation is then performed by CDC34, building ubiquitin chains from the UBE2D3-primed NFKBIA-linked ubiquitin. Also acts as an initiator E2, in conjunction with RNF8, for the priming of PCNA. Monoubiquitination of PCNA, and its subsequent polyubiquitination, are essential events in the operation of the DNA damage tolerance (DDT) pathway that is activated after DNA damage caused by UV or chemical agents during S-phase. Associates with the BRCA1/BARD1 E3 ligase complex to perform ubiquitination at DNA damage sites following ionizing radiation leading to DNA repair. Targets DAPK3 for ubiquitination which influences promyelocytic leukemia protein nuclear body (PML-NB) formation in the nucleus. In conjunction with the MDM2 and TOPORS E3 ligases, functions ubiquitination of p53/TP53. In conjunction with the CBL E3 ligase, targets EGFR for polyubiquitination at the plasma membrane as well as during its internalization and transport on endosomes. In conjunction with the STUB1 E3 quality control E3 ligase, ubiquitinates unfolded proteins to catalyze their immediate destruction. Together with RNF135, catalyzes the viral RNA-dependent 'Lys-63'-linked polyubiquitination of RIGI to activate the downstream signaling pathway that leads to interferon beta production. Together with ZNF598, catalyzes ubiquitination of 40S ribosomal proteins in response to ribosome collisions. In cooperation with the GATOR2 complex, catalyzes 'Lys-6'-linked ubiquitination of NPRL2.</text>
</comment>
<comment type="catalytic activity">
    <reaction evidence="1 2 3">
        <text>S-ubiquitinyl-[E1 ubiquitin-activating enzyme]-L-cysteine + [E2 ubiquitin-conjugating enzyme]-L-cysteine = [E1 ubiquitin-activating enzyme]-L-cysteine + S-ubiquitinyl-[E2 ubiquitin-conjugating enzyme]-L-cysteine.</text>
        <dbReference type="EC" id="2.3.2.23"/>
    </reaction>
</comment>
<comment type="catalytic activity">
    <reaction evidence="1">
        <text>S-ubiquitinyl-[E1 ubiquitin-activating enzyme]-L-cysteine + [acceptor protein]-L-lysine = [E1 ubiquitin-activating enzyme]-L-cysteine + N(6)-monoubiquitinyl-[acceptor protein]-L-lysine.</text>
        <dbReference type="EC" id="2.3.2.24"/>
    </reaction>
</comment>
<comment type="pathway">
    <text evidence="2">Protein modification; protein ubiquitination.</text>
</comment>
<comment type="subunit">
    <text evidence="1 4">Interacts with SCF (SKP1-CUL1-F-box protein) E3 ubiquitin ligase complex; when Cullin is neddylated, the interaction between the E2 and the SCF complex is strengthened. Interacts with DAPK3. Interacts with BRCA1; the DNA damage checkpoint promotes the association with BRCA1 after ionizing radiation. Interacts non-covalently with ubiquitin. Interacts with E3 ubiquitin-protein ligase CBLC. Interacts with UBTD1 (By similarity). Interacts with RIGI and RNF135; involved in RIGI ubiquitination and activation (By similarity).</text>
</comment>
<comment type="subcellular location">
    <subcellularLocation>
        <location evidence="1">Cell membrane</location>
        <topology evidence="1">Peripheral membrane protein</topology>
    </subcellularLocation>
    <subcellularLocation>
        <location evidence="1">Endosome membrane</location>
        <topology evidence="1">Peripheral membrane protein</topology>
    </subcellularLocation>
</comment>
<comment type="PTM">
    <text evidence="5">Phosphorylated by AURKB.</text>
</comment>
<comment type="similarity">
    <text evidence="2">Belongs to the ubiquitin-conjugating enzyme family.</text>
</comment>
<keyword id="KW-0053">Apoptosis</keyword>
<keyword id="KW-0067">ATP-binding</keyword>
<keyword id="KW-1003">Cell membrane</keyword>
<keyword id="KW-1015">Disulfide bond</keyword>
<keyword id="KW-0227">DNA damage</keyword>
<keyword id="KW-0234">DNA repair</keyword>
<keyword id="KW-0967">Endosome</keyword>
<keyword id="KW-0472">Membrane</keyword>
<keyword id="KW-0547">Nucleotide-binding</keyword>
<keyword id="KW-0597">Phosphoprotein</keyword>
<keyword id="KW-1185">Reference proteome</keyword>
<keyword id="KW-0808">Transferase</keyword>
<keyword id="KW-0833">Ubl conjugation pathway</keyword>
<feature type="chain" id="PRO_0000082467" description="Ubiquitin-conjugating enzyme E2 D3">
    <location>
        <begin position="1"/>
        <end position="147"/>
    </location>
</feature>
<feature type="domain" description="UBC core" evidence="2">
    <location>
        <begin position="1"/>
        <end position="147"/>
    </location>
</feature>
<feature type="active site" description="Glycyl thioester intermediate" evidence="2 3">
    <location>
        <position position="85"/>
    </location>
</feature>
<feature type="disulfide bond" evidence="1">
    <location>
        <begin position="21"/>
        <end position="107"/>
    </location>
</feature>
<gene>
    <name type="primary">Ube2d3</name>
</gene>
<accession>P61079</accession>
<evidence type="ECO:0000250" key="1">
    <source>
        <dbReference type="UniProtKB" id="P61077"/>
    </source>
</evidence>
<evidence type="ECO:0000255" key="2">
    <source>
        <dbReference type="PROSITE-ProRule" id="PRU00388"/>
    </source>
</evidence>
<evidence type="ECO:0000255" key="3">
    <source>
        <dbReference type="PROSITE-ProRule" id="PRU10133"/>
    </source>
</evidence>
<evidence type="ECO:0000269" key="4">
    <source>
    </source>
</evidence>
<evidence type="ECO:0000269" key="5">
    <source>
    </source>
</evidence>
<protein>
    <recommendedName>
        <fullName>Ubiquitin-conjugating enzyme E2 D3</fullName>
        <ecNumber>2.3.2.23</ecNumber>
    </recommendedName>
    <alternativeName>
        <fullName>(E3-independent) E2 ubiquitin-conjugating enzyme D3</fullName>
        <ecNumber>2.3.2.24</ecNumber>
    </alternativeName>
    <alternativeName>
        <fullName>E2 ubiquitin-conjugating enzyme D3</fullName>
    </alternativeName>
    <alternativeName>
        <fullName>Ubiquitin carrier protein D3</fullName>
    </alternativeName>
    <alternativeName>
        <fullName>Ubiquitin-conjugating enzyme E2(17)KB 3</fullName>
    </alternativeName>
    <alternativeName>
        <fullName>Ubiquitin-conjugating enzyme E2-17 kDa 3</fullName>
    </alternativeName>
    <alternativeName>
        <fullName>Ubiquitin-protein ligase D3</fullName>
    </alternativeName>
</protein>